<keyword id="KW-0325">Glycoprotein</keyword>
<keyword id="KW-0472">Membrane</keyword>
<keyword id="KW-1185">Reference proteome</keyword>
<keyword id="KW-0812">Transmembrane</keyword>
<keyword id="KW-1133">Transmembrane helix</keyword>
<protein>
    <recommendedName>
        <fullName>Transmembrane protein 104</fullName>
    </recommendedName>
</protein>
<reference key="1">
    <citation type="journal article" date="2005" name="Science">
        <title>The transcriptional landscape of the mammalian genome.</title>
        <authorList>
            <person name="Carninci P."/>
            <person name="Kasukawa T."/>
            <person name="Katayama S."/>
            <person name="Gough J."/>
            <person name="Frith M.C."/>
            <person name="Maeda N."/>
            <person name="Oyama R."/>
            <person name="Ravasi T."/>
            <person name="Lenhard B."/>
            <person name="Wells C."/>
            <person name="Kodzius R."/>
            <person name="Shimokawa K."/>
            <person name="Bajic V.B."/>
            <person name="Brenner S.E."/>
            <person name="Batalov S."/>
            <person name="Forrest A.R."/>
            <person name="Zavolan M."/>
            <person name="Davis M.J."/>
            <person name="Wilming L.G."/>
            <person name="Aidinis V."/>
            <person name="Allen J.E."/>
            <person name="Ambesi-Impiombato A."/>
            <person name="Apweiler R."/>
            <person name="Aturaliya R.N."/>
            <person name="Bailey T.L."/>
            <person name="Bansal M."/>
            <person name="Baxter L."/>
            <person name="Beisel K.W."/>
            <person name="Bersano T."/>
            <person name="Bono H."/>
            <person name="Chalk A.M."/>
            <person name="Chiu K.P."/>
            <person name="Choudhary V."/>
            <person name="Christoffels A."/>
            <person name="Clutterbuck D.R."/>
            <person name="Crowe M.L."/>
            <person name="Dalla E."/>
            <person name="Dalrymple B.P."/>
            <person name="de Bono B."/>
            <person name="Della Gatta G."/>
            <person name="di Bernardo D."/>
            <person name="Down T."/>
            <person name="Engstrom P."/>
            <person name="Fagiolini M."/>
            <person name="Faulkner G."/>
            <person name="Fletcher C.F."/>
            <person name="Fukushima T."/>
            <person name="Furuno M."/>
            <person name="Futaki S."/>
            <person name="Gariboldi M."/>
            <person name="Georgii-Hemming P."/>
            <person name="Gingeras T.R."/>
            <person name="Gojobori T."/>
            <person name="Green R.E."/>
            <person name="Gustincich S."/>
            <person name="Harbers M."/>
            <person name="Hayashi Y."/>
            <person name="Hensch T.K."/>
            <person name="Hirokawa N."/>
            <person name="Hill D."/>
            <person name="Huminiecki L."/>
            <person name="Iacono M."/>
            <person name="Ikeo K."/>
            <person name="Iwama A."/>
            <person name="Ishikawa T."/>
            <person name="Jakt M."/>
            <person name="Kanapin A."/>
            <person name="Katoh M."/>
            <person name="Kawasawa Y."/>
            <person name="Kelso J."/>
            <person name="Kitamura H."/>
            <person name="Kitano H."/>
            <person name="Kollias G."/>
            <person name="Krishnan S.P."/>
            <person name="Kruger A."/>
            <person name="Kummerfeld S.K."/>
            <person name="Kurochkin I.V."/>
            <person name="Lareau L.F."/>
            <person name="Lazarevic D."/>
            <person name="Lipovich L."/>
            <person name="Liu J."/>
            <person name="Liuni S."/>
            <person name="McWilliam S."/>
            <person name="Madan Babu M."/>
            <person name="Madera M."/>
            <person name="Marchionni L."/>
            <person name="Matsuda H."/>
            <person name="Matsuzawa S."/>
            <person name="Miki H."/>
            <person name="Mignone F."/>
            <person name="Miyake S."/>
            <person name="Morris K."/>
            <person name="Mottagui-Tabar S."/>
            <person name="Mulder N."/>
            <person name="Nakano N."/>
            <person name="Nakauchi H."/>
            <person name="Ng P."/>
            <person name="Nilsson R."/>
            <person name="Nishiguchi S."/>
            <person name="Nishikawa S."/>
            <person name="Nori F."/>
            <person name="Ohara O."/>
            <person name="Okazaki Y."/>
            <person name="Orlando V."/>
            <person name="Pang K.C."/>
            <person name="Pavan W.J."/>
            <person name="Pavesi G."/>
            <person name="Pesole G."/>
            <person name="Petrovsky N."/>
            <person name="Piazza S."/>
            <person name="Reed J."/>
            <person name="Reid J.F."/>
            <person name="Ring B.Z."/>
            <person name="Ringwald M."/>
            <person name="Rost B."/>
            <person name="Ruan Y."/>
            <person name="Salzberg S.L."/>
            <person name="Sandelin A."/>
            <person name="Schneider C."/>
            <person name="Schoenbach C."/>
            <person name="Sekiguchi K."/>
            <person name="Semple C.A."/>
            <person name="Seno S."/>
            <person name="Sessa L."/>
            <person name="Sheng Y."/>
            <person name="Shibata Y."/>
            <person name="Shimada H."/>
            <person name="Shimada K."/>
            <person name="Silva D."/>
            <person name="Sinclair B."/>
            <person name="Sperling S."/>
            <person name="Stupka E."/>
            <person name="Sugiura K."/>
            <person name="Sultana R."/>
            <person name="Takenaka Y."/>
            <person name="Taki K."/>
            <person name="Tammoja K."/>
            <person name="Tan S.L."/>
            <person name="Tang S."/>
            <person name="Taylor M.S."/>
            <person name="Tegner J."/>
            <person name="Teichmann S.A."/>
            <person name="Ueda H.R."/>
            <person name="van Nimwegen E."/>
            <person name="Verardo R."/>
            <person name="Wei C.L."/>
            <person name="Yagi K."/>
            <person name="Yamanishi H."/>
            <person name="Zabarovsky E."/>
            <person name="Zhu S."/>
            <person name="Zimmer A."/>
            <person name="Hide W."/>
            <person name="Bult C."/>
            <person name="Grimmond S.M."/>
            <person name="Teasdale R.D."/>
            <person name="Liu E.T."/>
            <person name="Brusic V."/>
            <person name="Quackenbush J."/>
            <person name="Wahlestedt C."/>
            <person name="Mattick J.S."/>
            <person name="Hume D.A."/>
            <person name="Kai C."/>
            <person name="Sasaki D."/>
            <person name="Tomaru Y."/>
            <person name="Fukuda S."/>
            <person name="Kanamori-Katayama M."/>
            <person name="Suzuki M."/>
            <person name="Aoki J."/>
            <person name="Arakawa T."/>
            <person name="Iida J."/>
            <person name="Imamura K."/>
            <person name="Itoh M."/>
            <person name="Kato T."/>
            <person name="Kawaji H."/>
            <person name="Kawagashira N."/>
            <person name="Kawashima T."/>
            <person name="Kojima M."/>
            <person name="Kondo S."/>
            <person name="Konno H."/>
            <person name="Nakano K."/>
            <person name="Ninomiya N."/>
            <person name="Nishio T."/>
            <person name="Okada M."/>
            <person name="Plessy C."/>
            <person name="Shibata K."/>
            <person name="Shiraki T."/>
            <person name="Suzuki S."/>
            <person name="Tagami M."/>
            <person name="Waki K."/>
            <person name="Watahiki A."/>
            <person name="Okamura-Oho Y."/>
            <person name="Suzuki H."/>
            <person name="Kawai J."/>
            <person name="Hayashizaki Y."/>
        </authorList>
    </citation>
    <scope>NUCLEOTIDE SEQUENCE [LARGE SCALE MRNA]</scope>
    <source>
        <strain>C57BL/6J</strain>
        <strain>NOD</strain>
        <tissue>Dendritic cell</tissue>
    </source>
</reference>
<reference key="2">
    <citation type="journal article" date="2010" name="Cell">
        <title>A tissue-specific atlas of mouse protein phosphorylation and expression.</title>
        <authorList>
            <person name="Huttlin E.L."/>
            <person name="Jedrychowski M.P."/>
            <person name="Elias J.E."/>
            <person name="Goswami T."/>
            <person name="Rad R."/>
            <person name="Beausoleil S.A."/>
            <person name="Villen J."/>
            <person name="Haas W."/>
            <person name="Sowa M.E."/>
            <person name="Gygi S.P."/>
        </authorList>
    </citation>
    <scope>IDENTIFICATION BY MASS SPECTROMETRY [LARGE SCALE ANALYSIS]</scope>
    <source>
        <tissue>Testis</tissue>
    </source>
</reference>
<name>TM104_MOUSE</name>
<dbReference type="EMBL" id="AK155041">
    <property type="protein sequence ID" value="BAE33008.1"/>
    <property type="molecule type" value="mRNA"/>
</dbReference>
<dbReference type="EMBL" id="AK171457">
    <property type="protein sequence ID" value="BAE42466.1"/>
    <property type="molecule type" value="mRNA"/>
</dbReference>
<dbReference type="CCDS" id="CCDS25623.1"/>
<dbReference type="RefSeq" id="NP_001028565.1">
    <property type="nucleotide sequence ID" value="NM_001033393.2"/>
</dbReference>
<dbReference type="BioGRID" id="236095">
    <property type="interactions" value="1"/>
</dbReference>
<dbReference type="FunCoup" id="Q3TB48">
    <property type="interactions" value="51"/>
</dbReference>
<dbReference type="STRING" id="10090.ENSMUSP00000056805"/>
<dbReference type="GlyCosmos" id="Q3TB48">
    <property type="glycosylation" value="1 site, No reported glycans"/>
</dbReference>
<dbReference type="GlyGen" id="Q3TB48">
    <property type="glycosylation" value="1 site"/>
</dbReference>
<dbReference type="iPTMnet" id="Q3TB48"/>
<dbReference type="PhosphoSitePlus" id="Q3TB48"/>
<dbReference type="jPOST" id="Q3TB48"/>
<dbReference type="PaxDb" id="10090-ENSMUSP00000056805"/>
<dbReference type="ProteomicsDB" id="259519"/>
<dbReference type="Antibodypedia" id="32018">
    <property type="antibodies" value="27 antibodies from 13 providers"/>
</dbReference>
<dbReference type="Ensembl" id="ENSMUST00000061450.7">
    <property type="protein sequence ID" value="ENSMUSP00000056805.7"/>
    <property type="gene ID" value="ENSMUSG00000045980.14"/>
</dbReference>
<dbReference type="GeneID" id="320534"/>
<dbReference type="KEGG" id="mmu:320534"/>
<dbReference type="UCSC" id="uc007mgv.2">
    <property type="organism name" value="mouse"/>
</dbReference>
<dbReference type="AGR" id="MGI:2444222"/>
<dbReference type="CTD" id="54868"/>
<dbReference type="MGI" id="MGI:2444222">
    <property type="gene designation" value="Tmem104"/>
</dbReference>
<dbReference type="VEuPathDB" id="HostDB:ENSMUSG00000045980"/>
<dbReference type="eggNOG" id="KOG3832">
    <property type="taxonomic scope" value="Eukaryota"/>
</dbReference>
<dbReference type="GeneTree" id="ENSGT00390000001244"/>
<dbReference type="InParanoid" id="Q3TB48"/>
<dbReference type="OMA" id="GHREGHP"/>
<dbReference type="OrthoDB" id="294541at2759"/>
<dbReference type="PhylomeDB" id="Q3TB48"/>
<dbReference type="TreeFam" id="TF314030"/>
<dbReference type="BioGRID-ORCS" id="320534">
    <property type="hits" value="1 hit in 78 CRISPR screens"/>
</dbReference>
<dbReference type="ChiTaRS" id="Tmem104">
    <property type="organism name" value="mouse"/>
</dbReference>
<dbReference type="PRO" id="PR:Q3TB48"/>
<dbReference type="Proteomes" id="UP000000589">
    <property type="component" value="Chromosome 11"/>
</dbReference>
<dbReference type="RNAct" id="Q3TB48">
    <property type="molecule type" value="protein"/>
</dbReference>
<dbReference type="Bgee" id="ENSMUSG00000045980">
    <property type="expression patterns" value="Expressed in yolk sac and 75 other cell types or tissues"/>
</dbReference>
<dbReference type="ExpressionAtlas" id="Q3TB48">
    <property type="expression patterns" value="baseline and differential"/>
</dbReference>
<dbReference type="GO" id="GO:0016020">
    <property type="term" value="C:membrane"/>
    <property type="evidence" value="ECO:0007669"/>
    <property type="project" value="UniProtKB-SubCell"/>
</dbReference>
<dbReference type="Gene3D" id="1.20.1740.10">
    <property type="entry name" value="Amino acid/polyamine transporter I"/>
    <property type="match status" value="1"/>
</dbReference>
<dbReference type="InterPro" id="IPR013057">
    <property type="entry name" value="AA_transpt_TM"/>
</dbReference>
<dbReference type="PANTHER" id="PTHR16189:SF0">
    <property type="entry name" value="TRANSMEMBRANE PROTEIN 104"/>
    <property type="match status" value="1"/>
</dbReference>
<dbReference type="PANTHER" id="PTHR16189">
    <property type="entry name" value="TRANSMEMBRANE PROTEIN 104-RELATED"/>
    <property type="match status" value="1"/>
</dbReference>
<dbReference type="Pfam" id="PF01490">
    <property type="entry name" value="Aa_trans"/>
    <property type="match status" value="2"/>
</dbReference>
<proteinExistence type="evidence at protein level"/>
<evidence type="ECO:0000255" key="1"/>
<evidence type="ECO:0000256" key="2">
    <source>
        <dbReference type="SAM" id="MobiDB-lite"/>
    </source>
</evidence>
<evidence type="ECO:0000305" key="3"/>
<accession>Q3TB48</accession>
<accession>Q3U2Y2</accession>
<gene>
    <name type="primary">Tmem104</name>
</gene>
<organism>
    <name type="scientific">Mus musculus</name>
    <name type="common">Mouse</name>
    <dbReference type="NCBI Taxonomy" id="10090"/>
    <lineage>
        <taxon>Eukaryota</taxon>
        <taxon>Metazoa</taxon>
        <taxon>Chordata</taxon>
        <taxon>Craniata</taxon>
        <taxon>Vertebrata</taxon>
        <taxon>Euteleostomi</taxon>
        <taxon>Mammalia</taxon>
        <taxon>Eutheria</taxon>
        <taxon>Euarchontoglires</taxon>
        <taxon>Glires</taxon>
        <taxon>Rodentia</taxon>
        <taxon>Myomorpha</taxon>
        <taxon>Muroidea</taxon>
        <taxon>Muridae</taxon>
        <taxon>Murinae</taxon>
        <taxon>Mus</taxon>
        <taxon>Mus</taxon>
    </lineage>
</organism>
<comment type="subcellular location">
    <subcellularLocation>
        <location evidence="3">Membrane</location>
        <topology evidence="3">Multi-pass membrane protein</topology>
    </subcellularLocation>
</comment>
<comment type="similarity">
    <text evidence="3">Belongs to the TMEM104 family.</text>
</comment>
<feature type="chain" id="PRO_0000254179" description="Transmembrane protein 104">
    <location>
        <begin position="1"/>
        <end position="496"/>
    </location>
</feature>
<feature type="topological domain" description="Cytoplasmic" evidence="1">
    <location>
        <begin position="1"/>
        <end position="10"/>
    </location>
</feature>
<feature type="transmembrane region" description="Helical" evidence="1">
    <location>
        <begin position="11"/>
        <end position="31"/>
    </location>
</feature>
<feature type="topological domain" description="Extracellular" evidence="1">
    <location>
        <begin position="32"/>
        <end position="36"/>
    </location>
</feature>
<feature type="transmembrane region" description="Helical" evidence="1">
    <location>
        <begin position="37"/>
        <end position="57"/>
    </location>
</feature>
<feature type="topological domain" description="Cytoplasmic" evidence="1">
    <location>
        <begin position="58"/>
        <end position="146"/>
    </location>
</feature>
<feature type="transmembrane region" description="Helical" evidence="1">
    <location>
        <begin position="147"/>
        <end position="167"/>
    </location>
</feature>
<feature type="topological domain" description="Extracellular" evidence="1">
    <location>
        <begin position="168"/>
        <end position="204"/>
    </location>
</feature>
<feature type="transmembrane region" description="Helical" evidence="1">
    <location>
        <begin position="205"/>
        <end position="225"/>
    </location>
</feature>
<feature type="topological domain" description="Cytoplasmic" evidence="1">
    <location>
        <begin position="226"/>
        <end position="233"/>
    </location>
</feature>
<feature type="transmembrane region" description="Helical" evidence="1">
    <location>
        <begin position="234"/>
        <end position="254"/>
    </location>
</feature>
<feature type="topological domain" description="Extracellular" evidence="1">
    <location>
        <begin position="255"/>
        <end position="265"/>
    </location>
</feature>
<feature type="transmembrane region" description="Helical" evidence="1">
    <location>
        <begin position="266"/>
        <end position="286"/>
    </location>
</feature>
<feature type="topological domain" description="Cytoplasmic" evidence="1">
    <location>
        <begin position="287"/>
        <end position="306"/>
    </location>
</feature>
<feature type="transmembrane region" description="Helical" evidence="1">
    <location>
        <begin position="307"/>
        <end position="327"/>
    </location>
</feature>
<feature type="topological domain" description="Extracellular" evidence="1">
    <location>
        <begin position="328"/>
        <end position="354"/>
    </location>
</feature>
<feature type="transmembrane region" description="Helical" evidence="1">
    <location>
        <begin position="355"/>
        <end position="375"/>
    </location>
</feature>
<feature type="topological domain" description="Cytoplasmic" evidence="1">
    <location>
        <begin position="376"/>
        <end position="397"/>
    </location>
</feature>
<feature type="transmembrane region" description="Helical" evidence="1">
    <location>
        <begin position="398"/>
        <end position="418"/>
    </location>
</feature>
<feature type="topological domain" description="Extracellular" evidence="1">
    <location>
        <begin position="419"/>
        <end position="421"/>
    </location>
</feature>
<feature type="transmembrane region" description="Helical" evidence="1">
    <location>
        <begin position="422"/>
        <end position="442"/>
    </location>
</feature>
<feature type="topological domain" description="Cytoplasmic" evidence="1">
    <location>
        <begin position="443"/>
        <end position="470"/>
    </location>
</feature>
<feature type="transmembrane region" description="Helical" evidence="1">
    <location>
        <begin position="471"/>
        <end position="491"/>
    </location>
</feature>
<feature type="topological domain" description="Extracellular" evidence="1">
    <location>
        <begin position="492"/>
        <end position="496"/>
    </location>
</feature>
<feature type="region of interest" description="Disordered" evidence="2">
    <location>
        <begin position="81"/>
        <end position="100"/>
    </location>
</feature>
<feature type="compositionally biased region" description="Low complexity" evidence="2">
    <location>
        <begin position="91"/>
        <end position="100"/>
    </location>
</feature>
<feature type="glycosylation site" description="N-linked (GlcNAc...) asparagine" evidence="1">
    <location>
        <position position="193"/>
    </location>
</feature>
<feature type="sequence conflict" description="In Ref. 1; BAE33008." evidence="3" ref="1">
    <original>Q</original>
    <variation>R</variation>
    <location>
        <position position="434"/>
    </location>
</feature>
<sequence length="496" mass="55838">MAGEITETGELYSPYVGLVYMFNLIVGTGALTMPKAFATAGWLVSLVLLVFVGFMSFVTTTFAMEAMAAANAQLRWKRMETHKEEDDEDSSTASDSDLLSQDNYERAEKRPILSVQRRSSANLFEITDRVEMGQMASMFFNKVGVNLFYFCIITYLYGDLAIYAAAVPVSLMQVTCSVSGNDSCGVDTDARYNDTDLCWGPLRRVDVYRIYLAIFTVLLGPFTFFDVQKTKYLQILTSMMRWIAFAIMIVLALVRIGKGQGEGHPPLANFLGVQNLFGVCVYSFMCQHSLPSLITPISSKRHITRLLFLDYALILAFYGLLSFTAIFCFRGDSLMDMYTLNFARCDVVGLAAVRFFLGLFPVFTISTNFPIIAVTLRNNWKTLFHREGGTYPWVVDRVVFPTITLVPPILVAFCTHDLESLVAITGAYAGTGIQYVIPAFLVYLCRKDTQLTFGYGTVNKHRSPFRHTFWVAFVLLWAFSCFFFVTAYIVLKETQL</sequence>